<name>PUR5_YERP3</name>
<feature type="chain" id="PRO_1000062167" description="Phosphoribosylformylglycinamidine cyclo-ligase">
    <location>
        <begin position="1"/>
        <end position="347"/>
    </location>
</feature>
<keyword id="KW-0067">ATP-binding</keyword>
<keyword id="KW-0963">Cytoplasm</keyword>
<keyword id="KW-0436">Ligase</keyword>
<keyword id="KW-0547">Nucleotide-binding</keyword>
<keyword id="KW-0658">Purine biosynthesis</keyword>
<protein>
    <recommendedName>
        <fullName evidence="1">Phosphoribosylformylglycinamidine cyclo-ligase</fullName>
        <ecNumber evidence="1">6.3.3.1</ecNumber>
    </recommendedName>
    <alternativeName>
        <fullName evidence="1">AIR synthase</fullName>
    </alternativeName>
    <alternativeName>
        <fullName evidence="1">AIRS</fullName>
    </alternativeName>
    <alternativeName>
        <fullName evidence="1">Phosphoribosyl-aminoimidazole synthetase</fullName>
    </alternativeName>
</protein>
<sequence length="347" mass="36893">MTNKTSLSYKDAGVDIDAGNDLVDRIKGVVKQTRRPEVMGGLGGFGALCALPQKYREPILVSGTDGVGTKLRLAMDLKRHDTIGIDLVAMCVNDLVVQGAEPLFFLDYFATGKLDVDTAASVITGIAEGCKQSGCALVGGETAEMPGMYHGDDYDVAGFCVGVVEKSEIIDGSKVTPGDVLVALGASGPHSNGYSLVRKILDVSNTNPEQTSLEGKSLADHLLEPTKIYVKSILSLIEQLDIHAIAHLTGGGFWENIPRVLPQGMQAVIDEASWQWPAVFSWLQHAGNVSRHEMYRTFNCGVGMVVALPAELADKAVELLTASGEKAWKIGVIATATEGAEQVIINP</sequence>
<dbReference type="EC" id="6.3.3.1" evidence="1"/>
<dbReference type="EMBL" id="CP000720">
    <property type="protein sequence ID" value="ABS46368.1"/>
    <property type="molecule type" value="Genomic_DNA"/>
</dbReference>
<dbReference type="RefSeq" id="WP_012104831.1">
    <property type="nucleotide sequence ID" value="NC_009708.1"/>
</dbReference>
<dbReference type="SMR" id="A7FG37"/>
<dbReference type="GeneID" id="49785194"/>
<dbReference type="KEGG" id="ypi:YpsIP31758_1234"/>
<dbReference type="HOGENOM" id="CLU_047116_0_0_6"/>
<dbReference type="UniPathway" id="UPA00074">
    <property type="reaction ID" value="UER00129"/>
</dbReference>
<dbReference type="Proteomes" id="UP000002412">
    <property type="component" value="Chromosome"/>
</dbReference>
<dbReference type="GO" id="GO:0005829">
    <property type="term" value="C:cytosol"/>
    <property type="evidence" value="ECO:0007669"/>
    <property type="project" value="TreeGrafter"/>
</dbReference>
<dbReference type="GO" id="GO:0005524">
    <property type="term" value="F:ATP binding"/>
    <property type="evidence" value="ECO:0007669"/>
    <property type="project" value="UniProtKB-KW"/>
</dbReference>
<dbReference type="GO" id="GO:0004637">
    <property type="term" value="F:phosphoribosylamine-glycine ligase activity"/>
    <property type="evidence" value="ECO:0007669"/>
    <property type="project" value="TreeGrafter"/>
</dbReference>
<dbReference type="GO" id="GO:0004641">
    <property type="term" value="F:phosphoribosylformylglycinamidine cyclo-ligase activity"/>
    <property type="evidence" value="ECO:0007669"/>
    <property type="project" value="UniProtKB-UniRule"/>
</dbReference>
<dbReference type="GO" id="GO:0006189">
    <property type="term" value="P:'de novo' IMP biosynthetic process"/>
    <property type="evidence" value="ECO:0007669"/>
    <property type="project" value="UniProtKB-UniRule"/>
</dbReference>
<dbReference type="GO" id="GO:0046084">
    <property type="term" value="P:adenine biosynthetic process"/>
    <property type="evidence" value="ECO:0007669"/>
    <property type="project" value="TreeGrafter"/>
</dbReference>
<dbReference type="CDD" id="cd02196">
    <property type="entry name" value="PurM"/>
    <property type="match status" value="1"/>
</dbReference>
<dbReference type="FunFam" id="3.30.1330.10:FF:000001">
    <property type="entry name" value="Phosphoribosylformylglycinamidine cyclo-ligase"/>
    <property type="match status" value="1"/>
</dbReference>
<dbReference type="FunFam" id="3.90.650.10:FF:000001">
    <property type="entry name" value="Phosphoribosylformylglycinamidine cyclo-ligase"/>
    <property type="match status" value="1"/>
</dbReference>
<dbReference type="Gene3D" id="3.90.650.10">
    <property type="entry name" value="PurM-like C-terminal domain"/>
    <property type="match status" value="1"/>
</dbReference>
<dbReference type="Gene3D" id="3.30.1330.10">
    <property type="entry name" value="PurM-like, N-terminal domain"/>
    <property type="match status" value="1"/>
</dbReference>
<dbReference type="HAMAP" id="MF_00741">
    <property type="entry name" value="AIRS"/>
    <property type="match status" value="1"/>
</dbReference>
<dbReference type="InterPro" id="IPR010918">
    <property type="entry name" value="PurM-like_C_dom"/>
</dbReference>
<dbReference type="InterPro" id="IPR036676">
    <property type="entry name" value="PurM-like_C_sf"/>
</dbReference>
<dbReference type="InterPro" id="IPR016188">
    <property type="entry name" value="PurM-like_N"/>
</dbReference>
<dbReference type="InterPro" id="IPR036921">
    <property type="entry name" value="PurM-like_N_sf"/>
</dbReference>
<dbReference type="InterPro" id="IPR004733">
    <property type="entry name" value="PurM_cligase"/>
</dbReference>
<dbReference type="NCBIfam" id="TIGR00878">
    <property type="entry name" value="purM"/>
    <property type="match status" value="1"/>
</dbReference>
<dbReference type="PANTHER" id="PTHR10520:SF12">
    <property type="entry name" value="TRIFUNCTIONAL PURINE BIOSYNTHETIC PROTEIN ADENOSINE-3"/>
    <property type="match status" value="1"/>
</dbReference>
<dbReference type="PANTHER" id="PTHR10520">
    <property type="entry name" value="TRIFUNCTIONAL PURINE BIOSYNTHETIC PROTEIN ADENOSINE-3-RELATED"/>
    <property type="match status" value="1"/>
</dbReference>
<dbReference type="Pfam" id="PF00586">
    <property type="entry name" value="AIRS"/>
    <property type="match status" value="1"/>
</dbReference>
<dbReference type="Pfam" id="PF02769">
    <property type="entry name" value="AIRS_C"/>
    <property type="match status" value="1"/>
</dbReference>
<dbReference type="SUPFAM" id="SSF56042">
    <property type="entry name" value="PurM C-terminal domain-like"/>
    <property type="match status" value="1"/>
</dbReference>
<dbReference type="SUPFAM" id="SSF55326">
    <property type="entry name" value="PurM N-terminal domain-like"/>
    <property type="match status" value="1"/>
</dbReference>
<gene>
    <name evidence="1" type="primary">purM</name>
    <name type="ordered locus">YpsIP31758_1234</name>
</gene>
<accession>A7FG37</accession>
<evidence type="ECO:0000255" key="1">
    <source>
        <dbReference type="HAMAP-Rule" id="MF_00741"/>
    </source>
</evidence>
<organism>
    <name type="scientific">Yersinia pseudotuberculosis serotype O:1b (strain IP 31758)</name>
    <dbReference type="NCBI Taxonomy" id="349747"/>
    <lineage>
        <taxon>Bacteria</taxon>
        <taxon>Pseudomonadati</taxon>
        <taxon>Pseudomonadota</taxon>
        <taxon>Gammaproteobacteria</taxon>
        <taxon>Enterobacterales</taxon>
        <taxon>Yersiniaceae</taxon>
        <taxon>Yersinia</taxon>
    </lineage>
</organism>
<reference key="1">
    <citation type="journal article" date="2007" name="PLoS Genet.">
        <title>The complete genome sequence of Yersinia pseudotuberculosis IP31758, the causative agent of Far East scarlet-like fever.</title>
        <authorList>
            <person name="Eppinger M."/>
            <person name="Rosovitz M.J."/>
            <person name="Fricke W.F."/>
            <person name="Rasko D.A."/>
            <person name="Kokorina G."/>
            <person name="Fayolle C."/>
            <person name="Lindler L.E."/>
            <person name="Carniel E."/>
            <person name="Ravel J."/>
        </authorList>
    </citation>
    <scope>NUCLEOTIDE SEQUENCE [LARGE SCALE GENOMIC DNA]</scope>
    <source>
        <strain>IP 31758</strain>
    </source>
</reference>
<proteinExistence type="inferred from homology"/>
<comment type="catalytic activity">
    <reaction evidence="1">
        <text>2-formamido-N(1)-(5-O-phospho-beta-D-ribosyl)acetamidine + ATP = 5-amino-1-(5-phospho-beta-D-ribosyl)imidazole + ADP + phosphate + H(+)</text>
        <dbReference type="Rhea" id="RHEA:23032"/>
        <dbReference type="ChEBI" id="CHEBI:15378"/>
        <dbReference type="ChEBI" id="CHEBI:30616"/>
        <dbReference type="ChEBI" id="CHEBI:43474"/>
        <dbReference type="ChEBI" id="CHEBI:137981"/>
        <dbReference type="ChEBI" id="CHEBI:147287"/>
        <dbReference type="ChEBI" id="CHEBI:456216"/>
        <dbReference type="EC" id="6.3.3.1"/>
    </reaction>
</comment>
<comment type="pathway">
    <text evidence="1">Purine metabolism; IMP biosynthesis via de novo pathway; 5-amino-1-(5-phospho-D-ribosyl)imidazole from N(2)-formyl-N(1)-(5-phospho-D-ribosyl)glycinamide: step 2/2.</text>
</comment>
<comment type="subcellular location">
    <subcellularLocation>
        <location evidence="1">Cytoplasm</location>
    </subcellularLocation>
</comment>
<comment type="similarity">
    <text evidence="1">Belongs to the AIR synthase family.</text>
</comment>